<evidence type="ECO:0000250" key="1"/>
<evidence type="ECO:0000255" key="2"/>
<evidence type="ECO:0000255" key="3">
    <source>
        <dbReference type="PROSITE-ProRule" id="PRU00793"/>
    </source>
</evidence>
<evidence type="ECO:0000256" key="4">
    <source>
        <dbReference type="SAM" id="MobiDB-lite"/>
    </source>
</evidence>
<keyword id="KW-0106">Calcium</keyword>
<keyword id="KW-0176">Collagen</keyword>
<keyword id="KW-1015">Disulfide bond</keyword>
<keyword id="KW-0272">Extracellular matrix</keyword>
<keyword id="KW-0325">Glycoprotein</keyword>
<keyword id="KW-0479">Metal-binding</keyword>
<keyword id="KW-1185">Reference proteome</keyword>
<keyword id="KW-0677">Repeat</keyword>
<keyword id="KW-0964">Secreted</keyword>
<keyword id="KW-0732">Signal</keyword>
<organism>
    <name type="scientific">Rattus norvegicus</name>
    <name type="common">Rat</name>
    <dbReference type="NCBI Taxonomy" id="10116"/>
    <lineage>
        <taxon>Eukaryota</taxon>
        <taxon>Metazoa</taxon>
        <taxon>Chordata</taxon>
        <taxon>Craniata</taxon>
        <taxon>Vertebrata</taxon>
        <taxon>Euteleostomi</taxon>
        <taxon>Mammalia</taxon>
        <taxon>Eutheria</taxon>
        <taxon>Euarchontoglires</taxon>
        <taxon>Glires</taxon>
        <taxon>Rodentia</taxon>
        <taxon>Myomorpha</taxon>
        <taxon>Muroidea</taxon>
        <taxon>Muridae</taxon>
        <taxon>Murinae</taxon>
        <taxon>Rattus</taxon>
    </lineage>
</organism>
<sequence length="1855" mass="187812">MGLARATAGLGPCCPPAPALLGAGLRWGGFLFAWILVSFSCHLASTQGAPEDVDVLQRLGLSWTKAGGGRSPAPPGVIPFPSGFIFTQRAKLQAPTTNVLPTTLGRELALVLSLCSHRVNHAFLFAIRSRKHRLQLGLQFLPGRTLVHLGPRQSVAFDLDVHDGRWHHLALELRGRTVTLVTACGQHRVPVPLPSRRDSMLDPQGSFLLGKMNPRAVQFEGALCQFSIHPVAQVAHNYCAHLRERCRQVDTYGPQVGALFPWDSGPAFALHPEPALLGLGNLTRNPATLGSRPISRGLMVTMAPAVPTKPLRMVHQDVSKLGSSQTPLVPAKQSARKTPSPFPSAALANSTRVFHSAPAQPRQITATSPTKRPPTKPSVSSLSVTPMKSPQAIQKAGTPSFSRPIPTTQKPTPLTSHPSPSKVSSATVRPVQKTFMTPQPPTLSPQALHPITGLPKKFTIPTVAKPQSKMTSWASKPVLARTNVPKALEQTVVAQSSVSYLGSQTLATALPPLGVGNSRMMPSTRDSTSTPAGSKKITGLEASKKTRHKSSPRKPIPLSSGKTARDASPRDLTTKPSQLSTPALVLAPAHLLSSSPQPTSSSFSFFHLPEPTPFLMLMGPPGSKGDCGLPGPPGLPGLPGSPGPRGPRGPPGPFGNPGLPGPPGAKGQKGDPGLSPGQAHDGAKGNMGLPGLAGNPGPMGRKGHKGHPGAAGHPGEQGQPGPEGSPGAKGYPGRQGFPGPVGDPGPKGSRGYIGLPGLFGLPGSDGERGLPGIPGKRGEMGRPGFPGDFGERGPPGLDGNPGEIGLPGPPGVLGLLGDMGALGPVGYPGPKGMKGLMGGVGEPGLKGDKGEQGVPGVSGDPGFQGDKGSHGLPGFPGARGKPGPMGKAGDKGSLGLPGPPGPEGFPGDIGPPGDNGPEGMKGKPGARGLPGPPGQLGPEGDEGPMGPPGVPGLEGQPGRKGFPGRPGLDGSKGEPGDPGRPGPVGEQGLMGFVGLVGEPGIVGEKGDRGVMGPPGAPGPKGSMGHPGTPGGVGDPGEPGPWGPPGSRGLPGMRGAKGHRGPRGPDGPAGEQGSKGLKGRVGPRGRPGQPGQQGAAGERGHSGAKGFLGIPGPSGPPGAKGLPGEPGSQGPQGPVGPPGEMGPKGPPGAVGEPGLPGDSGMKGDLGPLGPPGEQGLIGQRGEPGLEGDLGPVGPDGLKGDRGDPGPDGEHGEKGQEGLKGEEGLPGPPGITGVRGREGKPGSQGEKGQRGAKGAKGYQGQLGEMGIPGDPGPPGTPGPKGSRGTLGPMGAPGRMGAQGEPGLAGYNGHKGITGPLGPPGPKGEKGEQGEDGKTEGAPGPPGERGPVGDRGDRGEPGDPGYPGQEGVQGLRGEPGQQGQPGHPGPRGRPGPKGSKGEEGPKGKPGKAGASGRRGTQGLQGLPGPRGVVGRQGPEGMAGQDGNPGRDGRPGYQGEQGNDGDPGPVGPAGRRGNPGVAGLPGAQGPPGFKGESGLPGQLGPPGKRGTEGGTGLPGNQGEPGSKGQPGDSGEMGFPGVAGLFGPKGPPGDIGFKGIQGPRGPPGLMGKEGIIGPPGMLGPSGLPGPKGDRGSRGDWGLQGPRGPPGPRGRPGPPGPPWHPVQFQQDDLEAAFQTWMDAHGAVRLEQGYSYPDQLMLDQGGEIFKTLHYLSNLIQSIKTPLGTKENPARVCRDLMDCEQKMADGIYWVDPNLGCSSDTIEVSCNFTHGGQTCLKPITASKAEFAVSRVQMNFLHLLSSEGTQHITIHCLNMTVWQEGPARPSARQAVRFRAWNGQVFEAGGQFRPEVSMDGCKVHDGRWHQTLFTFRTQDPQQLPIVSVDNLPPVSSGKQYRLEVGPACFL</sequence>
<accession>Q80ZF0</accession>
<gene>
    <name type="primary">Col27a1</name>
</gene>
<reference key="1">
    <citation type="submission" date="2003-02" db="EMBL/GenBank/DDBJ databases">
        <title>Characterization of the rat col27a1 gene and its predicted protein product, proa1(XXVII).</title>
        <authorList>
            <person name="Pace J.M."/>
            <person name="Byers P.H."/>
        </authorList>
    </citation>
    <scope>NUCLEOTIDE SEQUENCE [MRNA]</scope>
</reference>
<comment type="function">
    <text evidence="1">Plays a role during the calcification of cartilage and the transition of cartilage to bone.</text>
</comment>
<comment type="subcellular location">
    <subcellularLocation>
        <location>Secreted</location>
        <location>Extracellular space</location>
        <location>Extracellular matrix</location>
    </subcellularLocation>
    <text evidence="1">Found on some small banded collagen fibrils and meshworks.</text>
</comment>
<comment type="domain">
    <text evidence="1">The C-terminal propeptide, also known as COLFI domain, have crucial roles in tissue growth and repair by controlling both the intracellular assembly of procollagen molecules and the extracellular assembly of collagen fibrils. It binds a calcium ion which is essential for its function (By similarity).</text>
</comment>
<comment type="similarity">
    <text evidence="3">Belongs to the fibrillar collagen family.</text>
</comment>
<feature type="signal peptide" evidence="2">
    <location>
        <begin position="1"/>
        <end position="48"/>
    </location>
</feature>
<feature type="propeptide" id="PRO_0000314672" description="N-terminal propeptide">
    <location>
        <begin position="49"/>
        <end position="618"/>
    </location>
</feature>
<feature type="chain" id="PRO_0000314673" description="Collagen alpha-1(XXVII) chain">
    <location>
        <begin position="619"/>
        <end position="1615"/>
    </location>
</feature>
<feature type="propeptide" id="PRO_0000314674" description="C-terminal propeptide">
    <location>
        <begin position="1616"/>
        <end position="1855"/>
    </location>
</feature>
<feature type="domain" description="Laminin G-like">
    <location>
        <begin position="81"/>
        <end position="246"/>
    </location>
</feature>
<feature type="domain" description="Collagen-like 1">
    <location>
        <begin position="619"/>
        <end position="673"/>
    </location>
</feature>
<feature type="domain" description="Collagen-like 2">
    <location>
        <begin position="682"/>
        <end position="741"/>
    </location>
</feature>
<feature type="domain" description="Collagen-like 3">
    <location>
        <begin position="751"/>
        <end position="810"/>
    </location>
</feature>
<feature type="domain" description="Collagen-like 4">
    <location>
        <begin position="826"/>
        <end position="885"/>
    </location>
</feature>
<feature type="domain" description="Collagen-like 5">
    <location>
        <begin position="886"/>
        <end position="945"/>
    </location>
</feature>
<feature type="domain" description="Collagen-like 6">
    <location>
        <begin position="946"/>
        <end position="1005"/>
    </location>
</feature>
<feature type="domain" description="Collagen-like 7">
    <location>
        <begin position="1006"/>
        <end position="1047"/>
    </location>
</feature>
<feature type="domain" description="Collagen-like 8">
    <location>
        <begin position="1048"/>
        <end position="1105"/>
    </location>
</feature>
<feature type="domain" description="Collagen-like 9">
    <location>
        <begin position="1108"/>
        <end position="1155"/>
    </location>
</feature>
<feature type="domain" description="Collagen-like 10">
    <location>
        <begin position="1156"/>
        <end position="1215"/>
    </location>
</feature>
<feature type="domain" description="Collagen-like 11">
    <location>
        <begin position="1216"/>
        <end position="1275"/>
    </location>
</feature>
<feature type="domain" description="Collagen-like 12">
    <location>
        <begin position="1276"/>
        <end position="1330"/>
    </location>
</feature>
<feature type="domain" description="Collagen-like 13">
    <location>
        <begin position="1334"/>
        <end position="1393"/>
    </location>
</feature>
<feature type="domain" description="Collagen-like 14">
    <location>
        <begin position="1433"/>
        <end position="1492"/>
    </location>
</feature>
<feature type="domain" description="Collagen-like 15">
    <location>
        <begin position="1493"/>
        <end position="1552"/>
    </location>
</feature>
<feature type="domain" description="Collagen-like 16">
    <location>
        <begin position="1553"/>
        <end position="1612"/>
    </location>
</feature>
<feature type="domain" description="Fibrillar collagen NC1" evidence="3">
    <location>
        <begin position="1655"/>
        <end position="1855"/>
    </location>
</feature>
<feature type="region of interest" description="Disordered" evidence="4">
    <location>
        <begin position="317"/>
        <end position="428"/>
    </location>
</feature>
<feature type="region of interest" description="Disordered" evidence="4">
    <location>
        <begin position="511"/>
        <end position="580"/>
    </location>
</feature>
<feature type="region of interest" description="Disordered" evidence="4">
    <location>
        <begin position="617"/>
        <end position="787"/>
    </location>
</feature>
<feature type="region of interest" description="Triple-helical region">
    <location>
        <begin position="619"/>
        <end position="1612"/>
    </location>
</feature>
<feature type="region of interest" description="Disordered" evidence="4">
    <location>
        <begin position="838"/>
        <end position="1617"/>
    </location>
</feature>
<feature type="compositionally biased region" description="Polar residues" evidence="4">
    <location>
        <begin position="382"/>
        <end position="427"/>
    </location>
</feature>
<feature type="compositionally biased region" description="Polar residues" evidence="4">
    <location>
        <begin position="520"/>
        <end position="532"/>
    </location>
</feature>
<feature type="compositionally biased region" description="Basic and acidic residues" evidence="4">
    <location>
        <begin position="563"/>
        <end position="573"/>
    </location>
</feature>
<feature type="compositionally biased region" description="Pro residues" evidence="4">
    <location>
        <begin position="630"/>
        <end position="663"/>
    </location>
</feature>
<feature type="compositionally biased region" description="Low complexity" evidence="4">
    <location>
        <begin position="708"/>
        <end position="728"/>
    </location>
</feature>
<feature type="compositionally biased region" description="Low complexity" evidence="4">
    <location>
        <begin position="905"/>
        <end position="918"/>
    </location>
</feature>
<feature type="compositionally biased region" description="Gly residues" evidence="4">
    <location>
        <begin position="1027"/>
        <end position="1036"/>
    </location>
</feature>
<feature type="compositionally biased region" description="Low complexity" evidence="4">
    <location>
        <begin position="1083"/>
        <end position="1095"/>
    </location>
</feature>
<feature type="compositionally biased region" description="Low complexity" evidence="4">
    <location>
        <begin position="1121"/>
        <end position="1131"/>
    </location>
</feature>
<feature type="compositionally biased region" description="Low complexity" evidence="4">
    <location>
        <begin position="1161"/>
        <end position="1176"/>
    </location>
</feature>
<feature type="compositionally biased region" description="Basic and acidic residues" evidence="4">
    <location>
        <begin position="1196"/>
        <end position="1221"/>
    </location>
</feature>
<feature type="compositionally biased region" description="Basic and acidic residues" evidence="4">
    <location>
        <begin position="1320"/>
        <end position="1332"/>
    </location>
</feature>
<feature type="compositionally biased region" description="Basic and acidic residues" evidence="4">
    <location>
        <begin position="1344"/>
        <end position="1354"/>
    </location>
</feature>
<feature type="compositionally biased region" description="Low complexity" evidence="4">
    <location>
        <begin position="1369"/>
        <end position="1378"/>
    </location>
</feature>
<feature type="compositionally biased region" description="Low complexity" evidence="4">
    <location>
        <begin position="1404"/>
        <end position="1431"/>
    </location>
</feature>
<feature type="compositionally biased region" description="Low complexity" evidence="4">
    <location>
        <begin position="1566"/>
        <end position="1581"/>
    </location>
</feature>
<feature type="compositionally biased region" description="Pro residues" evidence="4">
    <location>
        <begin position="1597"/>
        <end position="1614"/>
    </location>
</feature>
<feature type="binding site" evidence="1">
    <location>
        <position position="1703"/>
    </location>
    <ligand>
        <name>Ca(2+)</name>
        <dbReference type="ChEBI" id="CHEBI:29108"/>
    </ligand>
</feature>
<feature type="binding site" evidence="1">
    <location>
        <position position="1705"/>
    </location>
    <ligand>
        <name>Ca(2+)</name>
        <dbReference type="ChEBI" id="CHEBI:29108"/>
    </ligand>
</feature>
<feature type="binding site" evidence="1">
    <location>
        <position position="1708"/>
    </location>
    <ligand>
        <name>Ca(2+)</name>
        <dbReference type="ChEBI" id="CHEBI:29108"/>
    </ligand>
</feature>
<feature type="binding site" evidence="1">
    <location>
        <position position="1711"/>
    </location>
    <ligand>
        <name>Ca(2+)</name>
        <dbReference type="ChEBI" id="CHEBI:29108"/>
    </ligand>
</feature>
<feature type="glycosylation site" description="N-linked (GlcNAc...) asparagine" evidence="2">
    <location>
        <position position="281"/>
    </location>
</feature>
<feature type="glycosylation site" description="N-linked (GlcNAc...) asparagine" evidence="2">
    <location>
        <position position="349"/>
    </location>
</feature>
<feature type="glycosylation site" description="N-linked (GlcNAc...) asparagine" evidence="2">
    <location>
        <position position="1764"/>
    </location>
</feature>
<feature type="disulfide bond" evidence="3">
    <location>
        <begin position="1685"/>
        <end position="1717"/>
    </location>
</feature>
<feature type="disulfide bond" description="Interchain (with C-1285)" evidence="3">
    <location>
        <position position="1691"/>
    </location>
</feature>
<feature type="disulfide bond" description="Interchain (with C-1268)" evidence="3">
    <location>
        <position position="1708"/>
    </location>
</feature>
<feature type="disulfide bond" evidence="3">
    <location>
        <begin position="1726"/>
        <end position="1853"/>
    </location>
</feature>
<feature type="disulfide bond" evidence="3">
    <location>
        <begin position="1762"/>
        <end position="1806"/>
    </location>
</feature>
<proteinExistence type="evidence at transcript level"/>
<name>CORA1_RAT</name>
<protein>
    <recommendedName>
        <fullName>Collagen alpha-1(XXVII) chain</fullName>
    </recommendedName>
</protein>
<dbReference type="EMBL" id="AY232999">
    <property type="protein sequence ID" value="AAO43184.1"/>
    <property type="molecule type" value="mRNA"/>
</dbReference>
<dbReference type="RefSeq" id="NP_942042.1">
    <property type="nucleotide sequence ID" value="NM_198747.1"/>
</dbReference>
<dbReference type="SMR" id="Q80ZF0"/>
<dbReference type="FunCoup" id="Q80ZF0">
    <property type="interactions" value="264"/>
</dbReference>
<dbReference type="STRING" id="10116.ENSRNOP00000010333"/>
<dbReference type="GlyCosmos" id="Q80ZF0">
    <property type="glycosylation" value="3 sites, No reported glycans"/>
</dbReference>
<dbReference type="GlyGen" id="Q80ZF0">
    <property type="glycosylation" value="4 sites"/>
</dbReference>
<dbReference type="PhosphoSitePlus" id="Q80ZF0"/>
<dbReference type="PaxDb" id="10116-ENSRNOP00000010333"/>
<dbReference type="UCSC" id="RGD:735115">
    <property type="organism name" value="rat"/>
</dbReference>
<dbReference type="AGR" id="RGD:735115"/>
<dbReference type="RGD" id="735115">
    <property type="gene designation" value="Col27a1"/>
</dbReference>
<dbReference type="VEuPathDB" id="HostDB:ENSRNOG00000007657"/>
<dbReference type="eggNOG" id="KOG3544">
    <property type="taxonomic scope" value="Eukaryota"/>
</dbReference>
<dbReference type="HOGENOM" id="CLU_001074_19_1_1"/>
<dbReference type="InParanoid" id="Q80ZF0"/>
<dbReference type="PhylomeDB" id="Q80ZF0"/>
<dbReference type="TreeFam" id="TF344135"/>
<dbReference type="PRO" id="PR:Q80ZF0"/>
<dbReference type="Proteomes" id="UP000002494">
    <property type="component" value="Chromosome 5"/>
</dbReference>
<dbReference type="Bgee" id="ENSRNOG00000007657">
    <property type="expression patterns" value="Expressed in frontal cortex and 18 other cell types or tissues"/>
</dbReference>
<dbReference type="GO" id="GO:0005581">
    <property type="term" value="C:collagen trimer"/>
    <property type="evidence" value="ECO:0000318"/>
    <property type="project" value="GO_Central"/>
</dbReference>
<dbReference type="GO" id="GO:0062023">
    <property type="term" value="C:collagen-containing extracellular matrix"/>
    <property type="evidence" value="ECO:0000318"/>
    <property type="project" value="GO_Central"/>
</dbReference>
<dbReference type="GO" id="GO:0005615">
    <property type="term" value="C:extracellular space"/>
    <property type="evidence" value="ECO:0000318"/>
    <property type="project" value="GO_Central"/>
</dbReference>
<dbReference type="GO" id="GO:0005583">
    <property type="term" value="C:fibrillar collagen trimer"/>
    <property type="evidence" value="ECO:0000266"/>
    <property type="project" value="RGD"/>
</dbReference>
<dbReference type="GO" id="GO:0005201">
    <property type="term" value="F:extracellular matrix structural constituent"/>
    <property type="evidence" value="ECO:0000266"/>
    <property type="project" value="RGD"/>
</dbReference>
<dbReference type="GO" id="GO:0030020">
    <property type="term" value="F:extracellular matrix structural constituent conferring tensile strength"/>
    <property type="evidence" value="ECO:0000318"/>
    <property type="project" value="GO_Central"/>
</dbReference>
<dbReference type="GO" id="GO:0046872">
    <property type="term" value="F:metal ion binding"/>
    <property type="evidence" value="ECO:0007669"/>
    <property type="project" value="UniProtKB-KW"/>
</dbReference>
<dbReference type="GO" id="GO:0030198">
    <property type="term" value="P:extracellular matrix organization"/>
    <property type="evidence" value="ECO:0000266"/>
    <property type="project" value="RGD"/>
</dbReference>
<dbReference type="GO" id="GO:0003431">
    <property type="term" value="P:growth plate cartilage chondrocyte development"/>
    <property type="evidence" value="ECO:0000266"/>
    <property type="project" value="RGD"/>
</dbReference>
<dbReference type="GO" id="GO:0001501">
    <property type="term" value="P:skeletal system development"/>
    <property type="evidence" value="ECO:0000318"/>
    <property type="project" value="GO_Central"/>
</dbReference>
<dbReference type="FunFam" id="2.60.120.1000:FF:000011">
    <property type="entry name" value="Collagen alpha-1(XXVII) chain"/>
    <property type="match status" value="1"/>
</dbReference>
<dbReference type="FunFam" id="2.60.120.200:FF:000085">
    <property type="entry name" value="collagen alpha-1(XXVII) chain isoform X1"/>
    <property type="match status" value="1"/>
</dbReference>
<dbReference type="Gene3D" id="2.60.120.1000">
    <property type="match status" value="1"/>
</dbReference>
<dbReference type="Gene3D" id="2.60.120.200">
    <property type="match status" value="1"/>
</dbReference>
<dbReference type="InterPro" id="IPR008160">
    <property type="entry name" value="Collagen"/>
</dbReference>
<dbReference type="InterPro" id="IPR050938">
    <property type="entry name" value="Collagen_Structural_Proteins"/>
</dbReference>
<dbReference type="InterPro" id="IPR013320">
    <property type="entry name" value="ConA-like_dom_sf"/>
</dbReference>
<dbReference type="InterPro" id="IPR000885">
    <property type="entry name" value="Fib_collagen_C"/>
</dbReference>
<dbReference type="InterPro" id="IPR048287">
    <property type="entry name" value="TSPN-like_N"/>
</dbReference>
<dbReference type="PANTHER" id="PTHR37456:SF6">
    <property type="entry name" value="COLLAGEN ALPHA-1(XXIII) CHAIN-LIKE ISOFORM X2"/>
    <property type="match status" value="1"/>
</dbReference>
<dbReference type="PANTHER" id="PTHR37456">
    <property type="entry name" value="SI:CH211-266K2.1"/>
    <property type="match status" value="1"/>
</dbReference>
<dbReference type="Pfam" id="PF01410">
    <property type="entry name" value="COLFI"/>
    <property type="match status" value="2"/>
</dbReference>
<dbReference type="Pfam" id="PF01391">
    <property type="entry name" value="Collagen"/>
    <property type="match status" value="9"/>
</dbReference>
<dbReference type="SMART" id="SM00038">
    <property type="entry name" value="COLFI"/>
    <property type="match status" value="1"/>
</dbReference>
<dbReference type="SMART" id="SM00210">
    <property type="entry name" value="TSPN"/>
    <property type="match status" value="1"/>
</dbReference>
<dbReference type="SUPFAM" id="SSF49899">
    <property type="entry name" value="Concanavalin A-like lectins/glucanases"/>
    <property type="match status" value="1"/>
</dbReference>
<dbReference type="PROSITE" id="PS51461">
    <property type="entry name" value="NC1_FIB"/>
    <property type="match status" value="1"/>
</dbReference>